<comment type="function">
    <text evidence="1">The surface protein gp120 (SU) attaches the virus to the host lymphoid cell by binding to the primary receptor CD4. This interaction induces a structural rearrangement creating a high affinity binding site for a chemokine coreceptor like CCR5. This peculiar 2 stage receptor-interaction strategy allows gp120 to maintain the highly conserved coreceptor-binding site in a cryptic conformation, protected from neutralizing antibodies. These changes are transmitted to the transmembrane protein gp41 and are thought to activate its fusogenic potential by unmasking its fusion peptide (By similarity).</text>
</comment>
<comment type="function">
    <text evidence="1">Surface protein gp120 (SU) may target the virus to gut-associated lymphoid tissue (GALT) by binding host ITGA4/ITGB7 (alpha-4/beta-7 integrins), a complex that mediates T-cell migration to the GALT. Interaction between gp120 and ITGA4/ITGB7 would allow the virus to enter GALT early in the infection, infecting and killing most of GALT's resting CD4+ T-cells. This T-cell depletion is believed to be the major insult to the host immune system leading to AIDS (By similarity).</text>
</comment>
<comment type="function">
    <text evidence="1">The surface protein gp120 is a ligand for CD209/DC-SIGN and CLEC4M/DC-SIGNR, which are respectively found on dendritic cells (DCs), and on endothelial cells of liver sinusoids and lymph node sinuses. These interactions allow capture of viral particles at mucosal surfaces by these cells and subsequent transmission to permissive cells. DCs are professional antigen presenting cells, critical for host immunity by inducing specific immune responses against a broad variety of pathogens. They act as sentinels in various tissues where they take up antigen, process it, and present it to T-cells following migration to lymphoid organs. SIV subverts the migration properties of dendritic cells to gain access to CD4+ T-cells in lymph nodes. Virus transmission to permissive T-cells occurs either in trans (without DCs infection, through viral capture and transmission), or in cis (following DCs productive infection, through the usual CD4-gp120 interaction), thereby inducing a robust infection. In trans infection, bound virions remain infectious over days and it is proposed that they are not degraded, but protected in non-lysosomal acidic organelles within the DCs close to the cell membrane thus contributing to the viral infectious potential during DCs' migration from the periphery to the lymphoid tissues. On arrival at lymphoid tissues, intact virions recycle back to DCs' cell surface allowing virus transmission to CD4+ T-cells. Virion capture also seems to lead to MHC-II-restricted viral antigen presentation, and probably to the activation of SIV-specific CD4+ cells (By similarity).</text>
</comment>
<comment type="function">
    <text evidence="1">The transmembrane protein gp41 (TM) acts as a class I viral fusion protein. Under the current model, the protein has at least 3 conformational states: pre-fusion native state, pre-hairpin intermediate state, and post-fusion hairpin state. During fusion of viral and target intracellular membranes, the coiled coil regions (heptad repeats) assume a trimer-of-hairpins structure, positioning the fusion peptide in close proximity to the C-terminal region of the ectodomain. The formation of this structure appears to drive apposition and subsequent fusion of viral and target cell membranes. Complete fusion occurs in host cell endosomes. The virus undergoes clathrin-dependent internalization long before endosomal fusion, thus minimizing the surface exposure of conserved viral epitopes during fusion and reducing the efficacy of inhibitors targeting these epitopes. Membranes fusion leads to delivery of the nucleocapsid into the cytoplasm (By similarity).</text>
</comment>
<comment type="function">
    <text evidence="1">The envelope glycoprotein gp160 precursor down-modulates cell surface CD4 antigen by interacting with it in the endoplasmic reticulum and blocking its transport to the cell surface.</text>
</comment>
<comment type="function">
    <text evidence="1">The gp120-gp41 heterodimer allows rapid transcytosis of the virus through CD4 negative cells such as simple epithelial monolayers of the intestinal, rectal and endocervical epithelial barriers. Both gp120 and gp41 specifically recognize glycosphingolipids galactosyl-ceramide (GalCer) or 3' sulfo-galactosyl-ceramide (GalS) present in the lipid rafts structures of epithelial cells. Binding to these alternative receptors allows the rapid transcytosis of the virus through the epithelial cells. This transcytotic vesicle-mediated transport of virions from the apical side to the basolateral side of the epithelial cells does not involve infection of the cells themselves (By similarity).</text>
</comment>
<comment type="subunit">
    <molecule>Surface protein gp120</molecule>
    <text evidence="1">The mature envelope protein (Env) consists of a homotrimer of non-covalently associated gp120-gp41 heterodimers. The resulting complex protrudes from the virus surface as a spike. Interacts with host CD4 and CCR5 (By similarity). Gp120 also interacts with the C-type lectins CD209/DC-SIGN and CLEC4M/DC-SIGNR (collectively referred to as DC-SIGN(R)).</text>
</comment>
<comment type="subunit">
    <molecule>Transmembrane protein gp41</molecule>
    <text evidence="1">The mature envelope protein (Env) consists of a homotrimer of non-covalently associated gp120-gp41 heterodimers. The resulting complex protrudes from the virus surface as a spike.</text>
</comment>
<comment type="subcellular location">
    <molecule>Transmembrane protein gp41</molecule>
    <subcellularLocation>
        <location evidence="1">Virion membrane</location>
        <topology evidence="1">Single-pass type I membrane protein</topology>
    </subcellularLocation>
    <subcellularLocation>
        <location evidence="1">Host cell membrane</location>
        <topology evidence="1">Single-pass type I membrane protein</topology>
    </subcellularLocation>
    <subcellularLocation>
        <location evidence="4">Host endosome membrane</location>
        <topology evidence="4">Single-pass type I membrane protein</topology>
    </subcellularLocation>
    <text evidence="1">It is probably concentrated at the site of budding and incorporated into the virions possibly by contacts between the cytoplasmic tail of Env and the N-terminus of Gag.</text>
</comment>
<comment type="subcellular location">
    <molecule>Surface protein gp120</molecule>
    <subcellularLocation>
        <location evidence="1">Virion membrane</location>
        <topology evidence="1">Peripheral membrane protein</topology>
    </subcellularLocation>
    <subcellularLocation>
        <location evidence="1">Host cell membrane</location>
        <topology evidence="1">Peripheral membrane protein</topology>
    </subcellularLocation>
    <subcellularLocation>
        <location evidence="4">Host endosome membrane</location>
        <topology evidence="4">Peripheral membrane protein</topology>
    </subcellularLocation>
    <text evidence="1">The surface protein is not anchored to the viral envelope, but associates with the extravirion surface through its binding to TM. It is probably concentrated at the site of budding and incorporated into the virions possibly by contacts between the cytoplasmic tail of Env and the N-terminus of Gag (By similarity).</text>
</comment>
<comment type="domain">
    <text evidence="1">Some of the most genetically diverse regions of the viral genome are present in Env. They are called variable regions 1 through 5 (V1 through V5) (By similarity).</text>
</comment>
<comment type="domain">
    <text evidence="1">The YXXL motif is involved in determining the exact site of viral release at the surface of infected mononuclear cells and promotes endocytosis.</text>
</comment>
<comment type="domain">
    <text evidence="1">The 17 amino acids long immunosuppressive region is present in many retroviral envelope proteins. Synthetic peptides derived from this relatively conserved sequence inhibit immune function in vitro and in vivo (By similarity).</text>
</comment>
<comment type="PTM">
    <text evidence="1">Specific enzymatic cleavages in vivo yield mature proteins. Envelope glycoproteins are synthesized as an inactive precursor that is heavily N-glycosylated and processed likely by host cell furin in the Golgi to yield the mature SU and TM proteins. The cleavage site between SU and TM requires the minimal sequence [KR]-X-[KR]-R (By similarity).</text>
</comment>
<comment type="miscellaneous">
    <text>This is an African green monkey isolate.</text>
</comment>
<reference key="1">
    <citation type="journal article" date="1990" name="Virology">
        <title>Complete nucleotide sequence of a simian immunodeficiency virus from African green monkeys: a novel type of intragroup divergence.</title>
        <authorList>
            <person name="Baier M."/>
            <person name="Garber C."/>
            <person name="Mueller C."/>
            <person name="Cichutek K."/>
            <person name="Kurth R."/>
        </authorList>
    </citation>
    <scope>NUCLEOTIDE SEQUENCE [GENOMIC RNA]</scope>
</reference>
<accession>P27977</accession>
<organismHost>
    <name type="scientific">Cercopithecidae</name>
    <name type="common">Old World monkeys</name>
    <dbReference type="NCBI Taxonomy" id="9527"/>
</organismHost>
<feature type="signal peptide" evidence="2">
    <location>
        <begin position="1"/>
        <end position="19"/>
    </location>
</feature>
<feature type="chain" id="PRO_0000239506" description="Envelope glycoprotein gp160">
    <location>
        <begin position="20"/>
        <end position="877"/>
    </location>
</feature>
<feature type="chain" id="PRO_0000038458" description="Surface protein gp120" evidence="1">
    <location>
        <begin position="20"/>
        <end position="543"/>
    </location>
</feature>
<feature type="chain" id="PRO_0000038459" description="Transmembrane protein gp41" evidence="1">
    <location>
        <begin position="544"/>
        <end position="877"/>
    </location>
</feature>
<feature type="topological domain" description="Extracellular" evidence="2">
    <location>
        <begin position="20"/>
        <end position="707"/>
    </location>
</feature>
<feature type="transmembrane region" description="Helical" evidence="2">
    <location>
        <begin position="708"/>
        <end position="728"/>
    </location>
</feature>
<feature type="topological domain" description="Cytoplasmic" evidence="2">
    <location>
        <begin position="729"/>
        <end position="877"/>
    </location>
</feature>
<feature type="region of interest" description="V1">
    <location>
        <begin position="114"/>
        <end position="173"/>
    </location>
</feature>
<feature type="region of interest" description="V2">
    <location>
        <begin position="174"/>
        <end position="215"/>
    </location>
</feature>
<feature type="region of interest" description="V3">
    <location>
        <begin position="317"/>
        <end position="349"/>
    </location>
</feature>
<feature type="region of interest" description="V4">
    <location>
        <begin position="409"/>
        <end position="451"/>
    </location>
</feature>
<feature type="region of interest" description="V5">
    <location>
        <begin position="494"/>
        <end position="501"/>
    </location>
</feature>
<feature type="region of interest" description="Fusion peptide" evidence="2">
    <location>
        <begin position="544"/>
        <end position="564"/>
    </location>
</feature>
<feature type="region of interest" description="Immunosuppression" evidence="1">
    <location>
        <begin position="607"/>
        <end position="623"/>
    </location>
</feature>
<feature type="region of interest" description="MPER; binding to GalCer" evidence="1">
    <location>
        <begin position="689"/>
        <end position="710"/>
    </location>
</feature>
<feature type="region of interest" description="Disordered" evidence="3">
    <location>
        <begin position="751"/>
        <end position="779"/>
    </location>
</feature>
<feature type="coiled-coil region" evidence="2">
    <location>
        <begin position="668"/>
        <end position="692"/>
    </location>
</feature>
<feature type="short sequence motif" description="YXXL motif; contains endocytosis signal" evidence="1">
    <location>
        <begin position="739"/>
        <end position="742"/>
    </location>
</feature>
<feature type="site" description="Cleavage; by host furin" evidence="2">
    <location>
        <begin position="543"/>
        <end position="544"/>
    </location>
</feature>
<feature type="glycosylation site" description="N-linked (GlcNAc...) asparagine; by host" evidence="2">
    <location>
        <position position="36"/>
    </location>
</feature>
<feature type="glycosylation site" description="N-linked (GlcNAc...) asparagine; by host" evidence="2">
    <location>
        <position position="69"/>
    </location>
</feature>
<feature type="glycosylation site" description="N-linked (GlcNAc...) asparagine; by host" evidence="2">
    <location>
        <position position="118"/>
    </location>
</feature>
<feature type="glycosylation site" description="N-linked (GlcNAc...) asparagine; by host" evidence="2">
    <location>
        <position position="135"/>
    </location>
</feature>
<feature type="glycosylation site" description="N-linked (GlcNAc...) asparagine; by host" evidence="2">
    <location>
        <position position="148"/>
    </location>
</feature>
<feature type="glycosylation site" description="N-linked (GlcNAc...) asparagine; by host" evidence="2">
    <location>
        <position position="158"/>
    </location>
</feature>
<feature type="glycosylation site" description="N-linked (GlcNAc...) asparagine; by host" evidence="2">
    <location>
        <position position="173"/>
    </location>
</feature>
<feature type="glycosylation site" description="N-linked (GlcNAc...) asparagine; by host" evidence="2">
    <location>
        <position position="204"/>
    </location>
</feature>
<feature type="glycosylation site" description="N-linked (GlcNAc...) asparagine; by host" evidence="2">
    <location>
        <position position="216"/>
    </location>
</feature>
<feature type="glycosylation site" description="N-linked (GlcNAc...) asparagine; by host" evidence="2">
    <location>
        <position position="258"/>
    </location>
</feature>
<feature type="glycosylation site" description="N-linked (GlcNAc...) asparagine; by host" evidence="2">
    <location>
        <position position="261"/>
    </location>
</feature>
<feature type="glycosylation site" description="N-linked (GlcNAc...) asparagine; by host" evidence="2">
    <location>
        <position position="272"/>
    </location>
</feature>
<feature type="glycosylation site" description="N-linked (GlcNAc...) asparagine; by host" evidence="2">
    <location>
        <position position="282"/>
    </location>
</feature>
<feature type="glycosylation site" description="N-linked (GlcNAc...) asparagine; by host" evidence="2">
    <location>
        <position position="288"/>
    </location>
</feature>
<feature type="glycosylation site" description="N-linked (GlcNAc...) asparagine; by host" evidence="2">
    <location>
        <position position="300"/>
    </location>
</feature>
<feature type="glycosylation site" description="N-linked (GlcNAc...) asparagine; by host" evidence="2">
    <location>
        <position position="312"/>
    </location>
</feature>
<feature type="glycosylation site" description="N-linked (GlcNAc...) asparagine; by host" evidence="2">
    <location>
        <position position="322"/>
    </location>
</feature>
<feature type="glycosylation site" description="N-linked (GlcNAc...) asparagine; by host" evidence="2">
    <location>
        <position position="379"/>
    </location>
</feature>
<feature type="glycosylation site" description="N-linked (GlcNAc...) asparagine; by host" evidence="2">
    <location>
        <position position="420"/>
    </location>
</feature>
<feature type="glycosylation site" description="N-linked (GlcNAc...) asparagine; by host" evidence="2">
    <location>
        <position position="431"/>
    </location>
</feature>
<feature type="glycosylation site" description="N-linked (GlcNAc...) asparagine; by host" evidence="2">
    <location>
        <position position="495"/>
    </location>
</feature>
<feature type="glycosylation site" description="N-linked (GlcNAc...) asparagine; by host" evidence="2">
    <location>
        <position position="498"/>
    </location>
</feature>
<feature type="glycosylation site" description="N-linked (GlcNAc...) asparagine; by host" evidence="2">
    <location>
        <position position="652"/>
    </location>
</feature>
<feature type="glycosylation site" description="N-linked (GlcNAc...) asparagine; by host" evidence="2">
    <location>
        <position position="668"/>
    </location>
</feature>
<feature type="disulfide bond" evidence="1">
    <location>
        <begin position="102"/>
        <end position="224"/>
    </location>
</feature>
<feature type="disulfide bond" evidence="1">
    <location>
        <begin position="109"/>
        <end position="215"/>
    </location>
</feature>
<feature type="disulfide bond" evidence="1">
    <location>
        <begin position="114"/>
        <end position="174"/>
    </location>
</feature>
<feature type="disulfide bond" evidence="1">
    <location>
        <begin position="237"/>
        <end position="267"/>
    </location>
</feature>
<feature type="disulfide bond" evidence="1">
    <location>
        <begin position="247"/>
        <end position="259"/>
    </location>
</feature>
<feature type="disulfide bond" evidence="1">
    <location>
        <begin position="317"/>
        <end position="350"/>
    </location>
</feature>
<feature type="disulfide bond" evidence="1">
    <location>
        <begin position="402"/>
        <end position="478"/>
    </location>
</feature>
<feature type="disulfide bond" evidence="1">
    <location>
        <begin position="409"/>
        <end position="451"/>
    </location>
</feature>
<organism>
    <name type="scientific">Simian immunodeficiency virus agm.vervet (isolate AGM3)</name>
    <name type="common">SIV-agm.ver</name>
    <name type="synonym">Simian immunodeficiency virus African green monkey vervet</name>
    <dbReference type="NCBI Taxonomy" id="11730"/>
    <lineage>
        <taxon>Viruses</taxon>
        <taxon>Riboviria</taxon>
        <taxon>Pararnavirae</taxon>
        <taxon>Artverviricota</taxon>
        <taxon>Revtraviricetes</taxon>
        <taxon>Ortervirales</taxon>
        <taxon>Retroviridae</taxon>
        <taxon>Orthoretrovirinae</taxon>
        <taxon>Lentivirus</taxon>
        <taxon>Simian immunodeficiency virus</taxon>
    </lineage>
</organism>
<protein>
    <recommendedName>
        <fullName>Envelope glycoprotein gp160</fullName>
    </recommendedName>
    <alternativeName>
        <fullName>Env polyprotein</fullName>
    </alternativeName>
    <component>
        <recommendedName>
            <fullName>Surface protein gp120</fullName>
            <shortName>SU</shortName>
        </recommendedName>
        <alternativeName>
            <fullName>Glycoprotein 120</fullName>
            <shortName>gp120</shortName>
        </alternativeName>
    </component>
    <component>
        <recommendedName>
            <fullName>Transmembrane protein gp41</fullName>
            <shortName>TM</shortName>
        </recommendedName>
        <alternativeName>
            <fullName>Glycoprotein 32</fullName>
            <shortName>gp32</shortName>
        </alternativeName>
    </component>
</protein>
<evidence type="ECO:0000250" key="1"/>
<evidence type="ECO:0000255" key="2"/>
<evidence type="ECO:0000256" key="3">
    <source>
        <dbReference type="SAM" id="MobiDB-lite"/>
    </source>
</evidence>
<evidence type="ECO:0000305" key="4"/>
<gene>
    <name type="primary">env</name>
</gene>
<dbReference type="EMBL" id="M30931">
    <property type="protein sequence ID" value="AAA91919.1"/>
    <property type="molecule type" value="Genomic_RNA"/>
</dbReference>
<dbReference type="PIR" id="C46356">
    <property type="entry name" value="C46356"/>
</dbReference>
<dbReference type="SMR" id="P27977"/>
<dbReference type="GlyCosmos" id="P27977">
    <property type="glycosylation" value="24 sites, No reported glycans"/>
</dbReference>
<dbReference type="GO" id="GO:0044175">
    <property type="term" value="C:host cell endosome membrane"/>
    <property type="evidence" value="ECO:0007669"/>
    <property type="project" value="UniProtKB-SubCell"/>
</dbReference>
<dbReference type="GO" id="GO:0020002">
    <property type="term" value="C:host cell plasma membrane"/>
    <property type="evidence" value="ECO:0007669"/>
    <property type="project" value="UniProtKB-SubCell"/>
</dbReference>
<dbReference type="GO" id="GO:0016020">
    <property type="term" value="C:membrane"/>
    <property type="evidence" value="ECO:0007669"/>
    <property type="project" value="UniProtKB-KW"/>
</dbReference>
<dbReference type="GO" id="GO:0019031">
    <property type="term" value="C:viral envelope"/>
    <property type="evidence" value="ECO:0007669"/>
    <property type="project" value="UniProtKB-KW"/>
</dbReference>
<dbReference type="GO" id="GO:0055036">
    <property type="term" value="C:virion membrane"/>
    <property type="evidence" value="ECO:0007669"/>
    <property type="project" value="UniProtKB-SubCell"/>
</dbReference>
<dbReference type="GO" id="GO:0005198">
    <property type="term" value="F:structural molecule activity"/>
    <property type="evidence" value="ECO:0007669"/>
    <property type="project" value="InterPro"/>
</dbReference>
<dbReference type="GO" id="GO:0039663">
    <property type="term" value="P:membrane fusion involved in viral entry into host cell"/>
    <property type="evidence" value="ECO:0007669"/>
    <property type="project" value="UniProtKB-KW"/>
</dbReference>
<dbReference type="GO" id="GO:0046718">
    <property type="term" value="P:symbiont entry into host cell"/>
    <property type="evidence" value="ECO:0007669"/>
    <property type="project" value="UniProtKB-KW"/>
</dbReference>
<dbReference type="GO" id="GO:0019062">
    <property type="term" value="P:virion attachment to host cell"/>
    <property type="evidence" value="ECO:0007669"/>
    <property type="project" value="UniProtKB-KW"/>
</dbReference>
<dbReference type="CDD" id="cd09909">
    <property type="entry name" value="HIV-1-like_HR1-HR2"/>
    <property type="match status" value="1"/>
</dbReference>
<dbReference type="Gene3D" id="1.10.287.210">
    <property type="match status" value="1"/>
</dbReference>
<dbReference type="Gene3D" id="2.170.40.20">
    <property type="entry name" value="Human immunodeficiency virus 1, Gp160, envelope glycoprotein"/>
    <property type="match status" value="1"/>
</dbReference>
<dbReference type="InterPro" id="IPR036377">
    <property type="entry name" value="Gp120_core_sf"/>
</dbReference>
<dbReference type="InterPro" id="IPR000328">
    <property type="entry name" value="GP41-like"/>
</dbReference>
<dbReference type="InterPro" id="IPR000777">
    <property type="entry name" value="HIV1_Gp120"/>
</dbReference>
<dbReference type="Pfam" id="PF00516">
    <property type="entry name" value="GP120"/>
    <property type="match status" value="1"/>
</dbReference>
<dbReference type="Pfam" id="PF00517">
    <property type="entry name" value="GP41"/>
    <property type="match status" value="1"/>
</dbReference>
<dbReference type="SUPFAM" id="SSF56502">
    <property type="entry name" value="gp120 core"/>
    <property type="match status" value="1"/>
</dbReference>
<dbReference type="SUPFAM" id="SSF58069">
    <property type="entry name" value="Virus ectodomain"/>
    <property type="match status" value="1"/>
</dbReference>
<sequence>MKLTLLIGILLIGIGVVLNTRQQWVTVFYGVPVWKNSSVQAFCMTPTTRLWATTNSIPDDHDYTEVPLNITEPFEAWADRNPLVAQAGSNIHLLFEQTLKPCVKLSPLCIKMSCVELNSSEPTTTPKSTTASTTNITASTTTLPCVQNKTSTVLESCNETIIEKELNEEPASNCTFAMAGYVRDQKKKYSVVWNDAEIMCKKGNNSNRECYMIHCNDSVIKEACDKTYWDELRLRYCAPAGFALLKCNDYDYAGFKTNCSNVSVVHCTNLINTTVTTGLLLNGSYSENRTQIWQKHRVSNDSVLVLFNKHYNLTVTCKRPGNKTVLPVTIMAGLVFHSQRYNTRLRQAWCHFQGNWRGAWKEVKNEIVKLPKDRYQGTNDTEEIYLQRLFGDPEAANLWFNCQGEFFYCKMDWFLNYLNNRTVDPDHNPCNGTKGKGKAPGPCAQRTYVACHIRSVINDWYTLSRKTYAPPREGHLQCTSTVTGMSVELNYNSKNRTNVTLSPQIETIWAAELGRYKLVEITPIGFAPTEVRRYTGGHDRTKRVPFVLGFLGFLGAAGTAMGAAATALTVQSQHLLAGILQQQKNLLAAVEAQQQMLKLTIWGVKNLNARVTALEKYLEDQARLNAWGCAWKQVCHTTVPWQWNNRTPDWNNMTWLEWERQISYLEGNITTQLEEARAQEEKNLDAYQKLSSWSDFWSWFDFSKWLNILKIGFLDVLGIIGLRLLYTVYSCIARVRQGYSPLSPQIHIHPWKGQPDNAEGPGEGGDKRKNSSEPWQKESGTAEWKSNWCKRLTNWCSISSIWLYNSCLTLLVHLRSAFQYIQYGLGELKAAAQEAVVALARLAQNAGYQIWLACRSAYRAIINSPRRVRQGLEGILN</sequence>
<proteinExistence type="inferred from homology"/>
<keyword id="KW-0053">Apoptosis</keyword>
<keyword id="KW-0165">Cleavage on pair of basic residues</keyword>
<keyword id="KW-0175">Coiled coil</keyword>
<keyword id="KW-1015">Disulfide bond</keyword>
<keyword id="KW-1168">Fusion of virus membrane with host membrane</keyword>
<keyword id="KW-0325">Glycoprotein</keyword>
<keyword id="KW-1032">Host cell membrane</keyword>
<keyword id="KW-1039">Host endosome</keyword>
<keyword id="KW-1043">Host membrane</keyword>
<keyword id="KW-0945">Host-virus interaction</keyword>
<keyword id="KW-0472">Membrane</keyword>
<keyword id="KW-0732">Signal</keyword>
<keyword id="KW-0812">Transmembrane</keyword>
<keyword id="KW-1133">Transmembrane helix</keyword>
<keyword id="KW-1161">Viral attachment to host cell</keyword>
<keyword id="KW-0261">Viral envelope protein</keyword>
<keyword id="KW-1162">Viral penetration into host cytoplasm</keyword>
<keyword id="KW-0946">Virion</keyword>
<keyword id="KW-1160">Virus entry into host cell</keyword>
<name>ENV_SIVVG</name>